<name>PP2A5_ARATH</name>
<dbReference type="EC" id="3.1.3.16"/>
<dbReference type="EMBL" id="U39568">
    <property type="protein sequence ID" value="AAC49668.1"/>
    <property type="molecule type" value="mRNA"/>
</dbReference>
<dbReference type="EMBL" id="AC002062">
    <property type="protein sequence ID" value="AAB61116.1"/>
    <property type="molecule type" value="Genomic_DNA"/>
</dbReference>
<dbReference type="EMBL" id="AC010675">
    <property type="protein sequence ID" value="AAG52565.1"/>
    <property type="molecule type" value="Genomic_DNA"/>
</dbReference>
<dbReference type="EMBL" id="CP002684">
    <property type="protein sequence ID" value="AEE35002.1"/>
    <property type="molecule type" value="Genomic_DNA"/>
</dbReference>
<dbReference type="EMBL" id="BT025871">
    <property type="protein sequence ID" value="ABF85773.1"/>
    <property type="molecule type" value="mRNA"/>
</dbReference>
<dbReference type="EMBL" id="AK227054">
    <property type="protein sequence ID" value="BAE99114.1"/>
    <property type="molecule type" value="mRNA"/>
</dbReference>
<dbReference type="PIR" id="B96722">
    <property type="entry name" value="B96722"/>
</dbReference>
<dbReference type="RefSeq" id="NP_177154.1">
    <property type="nucleotide sequence ID" value="NM_105665.3"/>
</dbReference>
<dbReference type="SMR" id="O04951"/>
<dbReference type="BioGRID" id="28554">
    <property type="interactions" value="17"/>
</dbReference>
<dbReference type="FunCoup" id="O04951">
    <property type="interactions" value="4166"/>
</dbReference>
<dbReference type="IntAct" id="O04951">
    <property type="interactions" value="1"/>
</dbReference>
<dbReference type="STRING" id="3702.O04951"/>
<dbReference type="PaxDb" id="3702-AT1G69960.1"/>
<dbReference type="ProteomicsDB" id="249116"/>
<dbReference type="EnsemblPlants" id="AT1G69960.1">
    <property type="protein sequence ID" value="AT1G69960.1"/>
    <property type="gene ID" value="AT1G69960"/>
</dbReference>
<dbReference type="GeneID" id="843333"/>
<dbReference type="Gramene" id="AT1G69960.1">
    <property type="protein sequence ID" value="AT1G69960.1"/>
    <property type="gene ID" value="AT1G69960"/>
</dbReference>
<dbReference type="KEGG" id="ath:AT1G69960"/>
<dbReference type="Araport" id="AT1G69960"/>
<dbReference type="TAIR" id="AT1G69960">
    <property type="gene designation" value="PP2A"/>
</dbReference>
<dbReference type="eggNOG" id="KOG0371">
    <property type="taxonomic scope" value="Eukaryota"/>
</dbReference>
<dbReference type="HOGENOM" id="CLU_004962_8_1_1"/>
<dbReference type="InParanoid" id="O04951"/>
<dbReference type="OMA" id="MECKALT"/>
<dbReference type="OrthoDB" id="1930084at2759"/>
<dbReference type="PhylomeDB" id="O04951"/>
<dbReference type="PRO" id="PR:O04951"/>
<dbReference type="Proteomes" id="UP000006548">
    <property type="component" value="Chromosome 1"/>
</dbReference>
<dbReference type="ExpressionAtlas" id="O04951">
    <property type="expression patterns" value="baseline and differential"/>
</dbReference>
<dbReference type="GO" id="GO:0005829">
    <property type="term" value="C:cytosol"/>
    <property type="evidence" value="ECO:0007669"/>
    <property type="project" value="UniProtKB-SubCell"/>
</dbReference>
<dbReference type="GO" id="GO:0005777">
    <property type="term" value="C:peroxisome"/>
    <property type="evidence" value="ECO:0007669"/>
    <property type="project" value="UniProtKB-SubCell"/>
</dbReference>
<dbReference type="GO" id="GO:0046872">
    <property type="term" value="F:metal ion binding"/>
    <property type="evidence" value="ECO:0007669"/>
    <property type="project" value="UniProtKB-KW"/>
</dbReference>
<dbReference type="GO" id="GO:0004722">
    <property type="term" value="F:protein serine/threonine phosphatase activity"/>
    <property type="evidence" value="ECO:0000250"/>
    <property type="project" value="TAIR"/>
</dbReference>
<dbReference type="GO" id="GO:2000012">
    <property type="term" value="P:regulation of auxin polar transport"/>
    <property type="evidence" value="ECO:0000315"/>
    <property type="project" value="TAIR"/>
</dbReference>
<dbReference type="CDD" id="cd07415">
    <property type="entry name" value="MPP_PP2A_PP4_PP6"/>
    <property type="match status" value="1"/>
</dbReference>
<dbReference type="FunFam" id="3.60.21.10:FF:000003">
    <property type="entry name" value="Serine/threonine-protein phosphatase"/>
    <property type="match status" value="1"/>
</dbReference>
<dbReference type="Gene3D" id="3.60.21.10">
    <property type="match status" value="1"/>
</dbReference>
<dbReference type="InterPro" id="IPR004843">
    <property type="entry name" value="Calcineurin-like_PHP_ApaH"/>
</dbReference>
<dbReference type="InterPro" id="IPR029052">
    <property type="entry name" value="Metallo-depent_PP-like"/>
</dbReference>
<dbReference type="InterPro" id="IPR047129">
    <property type="entry name" value="PPA2-like"/>
</dbReference>
<dbReference type="InterPro" id="IPR006186">
    <property type="entry name" value="Ser/Thr-sp_prot-phosphatase"/>
</dbReference>
<dbReference type="PANTHER" id="PTHR45619">
    <property type="entry name" value="SERINE/THREONINE-PROTEIN PHOSPHATASE PP2A-RELATED"/>
    <property type="match status" value="1"/>
</dbReference>
<dbReference type="Pfam" id="PF00149">
    <property type="entry name" value="Metallophos"/>
    <property type="match status" value="1"/>
</dbReference>
<dbReference type="PRINTS" id="PR00114">
    <property type="entry name" value="STPHPHTASE"/>
</dbReference>
<dbReference type="SMART" id="SM00156">
    <property type="entry name" value="PP2Ac"/>
    <property type="match status" value="1"/>
</dbReference>
<dbReference type="SUPFAM" id="SSF56300">
    <property type="entry name" value="Metallo-dependent phosphatases"/>
    <property type="match status" value="1"/>
</dbReference>
<dbReference type="PROSITE" id="PS00125">
    <property type="entry name" value="SER_THR_PHOSPHATASE"/>
    <property type="match status" value="1"/>
</dbReference>
<gene>
    <name evidence="10" type="primary">PP2A5</name>
    <name type="ordered locus">At1g69960</name>
    <name type="ORF">F20P5.30</name>
    <name type="ORF">T17F3.1</name>
</gene>
<reference key="1">
    <citation type="online journal article" date="1995" name="Plant Gene Register">
        <title>Characterization of a novel isoform of a type 2A serine/threonine protein phosphatase from Arabidopsis thaliana.</title>
        <authorList>
            <person name="Stamey R.T."/>
            <person name="Rundle S.J."/>
        </authorList>
        <locator>PGR95-116</locator>
    </citation>
    <scope>NUCLEOTIDE SEQUENCE [MRNA]</scope>
    <source>
        <strain>cv. Columbia</strain>
    </source>
</reference>
<reference key="2">
    <citation type="journal article" date="2000" name="Nature">
        <title>Sequence and analysis of chromosome 1 of the plant Arabidopsis thaliana.</title>
        <authorList>
            <person name="Theologis A."/>
            <person name="Ecker J.R."/>
            <person name="Palm C.J."/>
            <person name="Federspiel N.A."/>
            <person name="Kaul S."/>
            <person name="White O."/>
            <person name="Alonso J."/>
            <person name="Altafi H."/>
            <person name="Araujo R."/>
            <person name="Bowman C.L."/>
            <person name="Brooks S.Y."/>
            <person name="Buehler E."/>
            <person name="Chan A."/>
            <person name="Chao Q."/>
            <person name="Chen H."/>
            <person name="Cheuk R.F."/>
            <person name="Chin C.W."/>
            <person name="Chung M.K."/>
            <person name="Conn L."/>
            <person name="Conway A.B."/>
            <person name="Conway A.R."/>
            <person name="Creasy T.H."/>
            <person name="Dewar K."/>
            <person name="Dunn P."/>
            <person name="Etgu P."/>
            <person name="Feldblyum T.V."/>
            <person name="Feng J.-D."/>
            <person name="Fong B."/>
            <person name="Fujii C.Y."/>
            <person name="Gill J.E."/>
            <person name="Goldsmith A.D."/>
            <person name="Haas B."/>
            <person name="Hansen N.F."/>
            <person name="Hughes B."/>
            <person name="Huizar L."/>
            <person name="Hunter J.L."/>
            <person name="Jenkins J."/>
            <person name="Johnson-Hopson C."/>
            <person name="Khan S."/>
            <person name="Khaykin E."/>
            <person name="Kim C.J."/>
            <person name="Koo H.L."/>
            <person name="Kremenetskaia I."/>
            <person name="Kurtz D.B."/>
            <person name="Kwan A."/>
            <person name="Lam B."/>
            <person name="Langin-Hooper S."/>
            <person name="Lee A."/>
            <person name="Lee J.M."/>
            <person name="Lenz C.A."/>
            <person name="Li J.H."/>
            <person name="Li Y.-P."/>
            <person name="Lin X."/>
            <person name="Liu S.X."/>
            <person name="Liu Z.A."/>
            <person name="Luros J.S."/>
            <person name="Maiti R."/>
            <person name="Marziali A."/>
            <person name="Militscher J."/>
            <person name="Miranda M."/>
            <person name="Nguyen M."/>
            <person name="Nierman W.C."/>
            <person name="Osborne B.I."/>
            <person name="Pai G."/>
            <person name="Peterson J."/>
            <person name="Pham P.K."/>
            <person name="Rizzo M."/>
            <person name="Rooney T."/>
            <person name="Rowley D."/>
            <person name="Sakano H."/>
            <person name="Salzberg S.L."/>
            <person name="Schwartz J.R."/>
            <person name="Shinn P."/>
            <person name="Southwick A.M."/>
            <person name="Sun H."/>
            <person name="Tallon L.J."/>
            <person name="Tambunga G."/>
            <person name="Toriumi M.J."/>
            <person name="Town C.D."/>
            <person name="Utterback T."/>
            <person name="Van Aken S."/>
            <person name="Vaysberg M."/>
            <person name="Vysotskaia V.S."/>
            <person name="Walker M."/>
            <person name="Wu D."/>
            <person name="Yu G."/>
            <person name="Fraser C.M."/>
            <person name="Venter J.C."/>
            <person name="Davis R.W."/>
        </authorList>
    </citation>
    <scope>NUCLEOTIDE SEQUENCE [LARGE SCALE GENOMIC DNA]</scope>
    <source>
        <strain>cv. Columbia</strain>
    </source>
</reference>
<reference key="3">
    <citation type="journal article" date="2017" name="Plant J.">
        <title>Araport11: a complete reannotation of the Arabidopsis thaliana reference genome.</title>
        <authorList>
            <person name="Cheng C.Y."/>
            <person name="Krishnakumar V."/>
            <person name="Chan A.P."/>
            <person name="Thibaud-Nissen F."/>
            <person name="Schobel S."/>
            <person name="Town C.D."/>
        </authorList>
    </citation>
    <scope>GENOME REANNOTATION</scope>
    <source>
        <strain>cv. Columbia</strain>
    </source>
</reference>
<reference key="4">
    <citation type="submission" date="2006-06" db="EMBL/GenBank/DDBJ databases">
        <title>Arabidopsis ORF clones.</title>
        <authorList>
            <person name="Quinitio C."/>
            <person name="Chen H."/>
            <person name="Kim C.J."/>
            <person name="Shinn P."/>
            <person name="Ecker J.R."/>
        </authorList>
    </citation>
    <scope>NUCLEOTIDE SEQUENCE [LARGE SCALE MRNA]</scope>
    <source>
        <strain>cv. Columbia</strain>
    </source>
</reference>
<reference key="5">
    <citation type="submission" date="2006-07" db="EMBL/GenBank/DDBJ databases">
        <title>Large-scale analysis of RIKEN Arabidopsis full-length (RAFL) cDNAs.</title>
        <authorList>
            <person name="Totoki Y."/>
            <person name="Seki M."/>
            <person name="Ishida J."/>
            <person name="Nakajima M."/>
            <person name="Enju A."/>
            <person name="Kamiya A."/>
            <person name="Narusaka M."/>
            <person name="Shin-i T."/>
            <person name="Nakagawa M."/>
            <person name="Sakamoto N."/>
            <person name="Oishi K."/>
            <person name="Kohara Y."/>
            <person name="Kobayashi M."/>
            <person name="Toyoda A."/>
            <person name="Sakaki Y."/>
            <person name="Sakurai T."/>
            <person name="Iida K."/>
            <person name="Akiyama K."/>
            <person name="Satou M."/>
            <person name="Toyoda T."/>
            <person name="Konagaya A."/>
            <person name="Carninci P."/>
            <person name="Kawai J."/>
            <person name="Hayashizaki Y."/>
            <person name="Shinozaki K."/>
        </authorList>
    </citation>
    <scope>NUCLEOTIDE SEQUENCE [LARGE SCALE MRNA]</scope>
    <source>
        <strain>cv. Columbia</strain>
    </source>
</reference>
<reference key="6">
    <citation type="journal article" date="1999" name="Eur. J. Biochem.">
        <title>Molecular characterization of the B' regulatory subunit gene family of Arabidopsis protein phosphatase 2A.</title>
        <authorList>
            <person name="Haynes J.G."/>
            <person name="Hartung A.J."/>
            <person name="Hendershot J.D. III"/>
            <person name="Passingham R.S."/>
            <person name="Rundle S.J."/>
        </authorList>
    </citation>
    <scope>INTERACTION WITH PP2AA1</scope>
</reference>
<reference key="7">
    <citation type="journal article" date="2006" name="Plant J.">
        <title>AtCHIP functions as an E3 ubiquitin ligase of protein phosphatase 2A subunits and alters plant response to abscisic acid treatment.</title>
        <authorList>
            <person name="Luo J."/>
            <person name="Shen G."/>
            <person name="Yan J."/>
            <person name="He C."/>
            <person name="Zhang H."/>
        </authorList>
    </citation>
    <scope>INTERACTION WITH CHIP</scope>
</reference>
<reference key="8">
    <citation type="journal article" date="2007" name="Trends Plant Sci.">
        <title>Arabidopsis PPP family of serine/threonine phosphatases.</title>
        <authorList>
            <person name="Farkas I."/>
            <person name="Dombradi V."/>
            <person name="Miskei M."/>
            <person name="Szabados L."/>
            <person name="Koncz C."/>
        </authorList>
    </citation>
    <scope>GENE FAMILY</scope>
    <scope>NOMENCLATURE</scope>
</reference>
<reference key="9">
    <citation type="journal article" date="2007" name="J. Exp. Bot.">
        <title>Arabidopsis enhanced ethylene response 4 encodes an EIN3-interacting TFIID transcription factor required for proper ethylene response, including ERF1 induction.</title>
        <authorList>
            <person name="Robles L.M."/>
            <person name="Wampole J.S."/>
            <person name="Christians M.J."/>
            <person name="Larsen P.B."/>
        </authorList>
    </citation>
    <scope>INTERACTION WITH TAF12B</scope>
    <source>
        <strain>cv. Wassilewskija</strain>
    </source>
</reference>
<reference key="10">
    <citation type="journal article" date="2015" name="Plant Physiol.">
        <title>Protein phosphatase 2A holoenzyme is targeted to peroxisomes by piggybacking and positively affects peroxisomal beta-oxidation.</title>
        <authorList>
            <person name="Kataya A.R."/>
            <person name="Heidari B."/>
            <person name="Hagen L."/>
            <person name="Kommedal R."/>
            <person name="Slupphaug G."/>
            <person name="Lillo C."/>
        </authorList>
    </citation>
    <scope>FUNCTION</scope>
    <scope>INTERACTION WITH B'THETA</scope>
    <scope>SUBCELLULAR LOCATION</scope>
</reference>
<reference key="11">
    <citation type="journal article" date="2017" name="Plant Cell Environ.">
        <title>Overexpression of PP2A-C5 that encodes the catalytic subunit 5 of protein phosphatase 2A in Arabidopsis confers better root and shoot development under salt conditions.</title>
        <authorList>
            <person name="Hu R."/>
            <person name="Zhu Y."/>
            <person name="Wei J."/>
            <person name="Chen J."/>
            <person name="Shi H."/>
            <person name="Shen G."/>
            <person name="Zhang H."/>
        </authorList>
    </citation>
    <scope>FUNCTION</scope>
    <scope>INTERACTION WITH CLC-A; CLC-B; CLC-C AND CLC-G</scope>
    <scope>INDUCTION BY SALT STRESS</scope>
    <scope>DISRUPTION PHENOTYPE</scope>
</reference>
<reference key="12">
    <citation type="journal article" date="2017" name="Plant Cell Environ.">
        <title>Methylation of protein phosphatase 2A-influence of regulators and environmental stress factors.</title>
        <authorList>
            <person name="Creighton M.T."/>
            <person name="Kolton A."/>
            <person name="Kataya A.R.A."/>
            <person name="Maple-Groedem J."/>
            <person name="Averkina I.O."/>
            <person name="Heidari B."/>
            <person name="Lillo C."/>
        </authorList>
    </citation>
    <scope>METHYLATION AT LEU-307</scope>
</reference>
<protein>
    <recommendedName>
        <fullName>Serine/threonine-protein phosphatase PP2A-5 catalytic subunit</fullName>
        <ecNumber>3.1.3.16</ecNumber>
    </recommendedName>
    <alternativeName>
        <fullName>Protein phosphatase 2A isoform 5</fullName>
    </alternativeName>
</protein>
<sequence length="307" mass="35042">MPPATGDIDRQIEQLMECKALSETEVKMLCEHAKTILVEEYNVQPVKCPVTVCGDIHGQFYDLIELFRIGGSSPDTNYLFMGDYVDRGYYSVETVSLLVALKVRYRDRLTILRGNHESRQITQVYGFYDECLRKYGNANVWKHFTDLFDYLPLTALIESQVFCLHGGLSPSLDTLDNIRSLDRIQEVPHEGPMCDLLWSDPDDRCGWGISPRGAGYTFGQDIATQFNHTNGLSLISRAHQLVMEGFNWCQEKNVVTVFSAPNYCYRCGNMAAILEIGENMDQNFLQFDPAPRQVEPETTRKTPDYFL</sequence>
<keyword id="KW-0963">Cytoplasm</keyword>
<keyword id="KW-0378">Hydrolase</keyword>
<keyword id="KW-0464">Manganese</keyword>
<keyword id="KW-0479">Metal-binding</keyword>
<keyword id="KW-0488">Methylation</keyword>
<keyword id="KW-0576">Peroxisome</keyword>
<keyword id="KW-0597">Phosphoprotein</keyword>
<keyword id="KW-0904">Protein phosphatase</keyword>
<keyword id="KW-1185">Reference proteome</keyword>
<keyword id="KW-0346">Stress response</keyword>
<keyword id="KW-0832">Ubl conjugation</keyword>
<organism>
    <name type="scientific">Arabidopsis thaliana</name>
    <name type="common">Mouse-ear cress</name>
    <dbReference type="NCBI Taxonomy" id="3702"/>
    <lineage>
        <taxon>Eukaryota</taxon>
        <taxon>Viridiplantae</taxon>
        <taxon>Streptophyta</taxon>
        <taxon>Embryophyta</taxon>
        <taxon>Tracheophyta</taxon>
        <taxon>Spermatophyta</taxon>
        <taxon>Magnoliopsida</taxon>
        <taxon>eudicotyledons</taxon>
        <taxon>Gunneridae</taxon>
        <taxon>Pentapetalae</taxon>
        <taxon>rosids</taxon>
        <taxon>malvids</taxon>
        <taxon>Brassicales</taxon>
        <taxon>Brassicaceae</taxon>
        <taxon>Camelineae</taxon>
        <taxon>Arabidopsis</taxon>
    </lineage>
</organism>
<accession>O04951</accession>
<accession>Q1EC63</accession>
<accession>Q42544</accession>
<comment type="function">
    <text evidence="8 9">Associates with the serine/threonine-protein phosphatase PP2A regulatory subunits A and B' to positively regulates beta-oxidation of fatty acids and protoauxins in peroxisomes by dephosphorylating peroxisomal beta-oxidation-related proteins (PubMed:25489022). Involved in the positive regulation of salt stress responses. May function by increasing chloride channel activities on vacuolar membranes (PubMed:27676158).</text>
</comment>
<comment type="catalytic activity">
    <reaction>
        <text>O-phospho-L-seryl-[protein] + H2O = L-seryl-[protein] + phosphate</text>
        <dbReference type="Rhea" id="RHEA:20629"/>
        <dbReference type="Rhea" id="RHEA-COMP:9863"/>
        <dbReference type="Rhea" id="RHEA-COMP:11604"/>
        <dbReference type="ChEBI" id="CHEBI:15377"/>
        <dbReference type="ChEBI" id="CHEBI:29999"/>
        <dbReference type="ChEBI" id="CHEBI:43474"/>
        <dbReference type="ChEBI" id="CHEBI:83421"/>
        <dbReference type="EC" id="3.1.3.16"/>
    </reaction>
</comment>
<comment type="catalytic activity">
    <reaction>
        <text>O-phospho-L-threonyl-[protein] + H2O = L-threonyl-[protein] + phosphate</text>
        <dbReference type="Rhea" id="RHEA:47004"/>
        <dbReference type="Rhea" id="RHEA-COMP:11060"/>
        <dbReference type="Rhea" id="RHEA-COMP:11605"/>
        <dbReference type="ChEBI" id="CHEBI:15377"/>
        <dbReference type="ChEBI" id="CHEBI:30013"/>
        <dbReference type="ChEBI" id="CHEBI:43474"/>
        <dbReference type="ChEBI" id="CHEBI:61977"/>
        <dbReference type="EC" id="3.1.3.16"/>
    </reaction>
</comment>
<comment type="cofactor">
    <cofactor evidence="1">
        <name>Mn(2+)</name>
        <dbReference type="ChEBI" id="CHEBI:29035"/>
    </cofactor>
    <text evidence="1">Binds 2 manganese ions per subunit.</text>
</comment>
<comment type="subunit">
    <text evidence="2 5 6 7 8 9">PP2A consists of a common heterodimeric core enzyme, composed of a 36 kDa catalytic subunit (subunit C) and a 65 kDa constant regulatory subunit (subunit A), that associates with a variety of regulatory subunits such as subunits B (the R2/B/PR55/B55, R3/B''/PR72/PR130/PR59 and R5/B'/B56 families). Also interacts with CHIP and TAF12B. Interacts with B'THETA (PubMed:25489022). Interacts with CLC-A, CLC-B, CLC-C and CLC-G (PubMed:27676158).</text>
</comment>
<comment type="subcellular location">
    <subcellularLocation>
        <location evidence="8">Cytoplasm</location>
        <location evidence="8">Cytosol</location>
    </subcellularLocation>
    <subcellularLocation>
        <location evidence="8">Peroxisome</location>
    </subcellularLocation>
    <text evidence="8">Interacts with B'THETA in the cytosol and peroxisomal import occurs by a piggybacking transport.</text>
</comment>
<comment type="induction">
    <text evidence="9">Induced by salt stress.</text>
</comment>
<comment type="PTM">
    <text evidence="12">Reversibly methyl esterified on Leu-307 by leucine carboxyl methyltransferase 1 (LCMT1) and pectin methylesterase 1 (PME1). Carboxyl methylation influences the affinity of the catalytic subunit for the different regulatory subunits, thereby modulating the PP2A holoenzyme's substrate specificity, enzyme activity and cellular localization.</text>
</comment>
<comment type="PTM">
    <text evidence="3">Phosphorylation of either threonine (by autophosphorylation-activated protein kinase) or tyrosine results in inactivation of the phosphatase. Auto-dephosphorylation has been suggested as a mechanism for reactivation.</text>
</comment>
<comment type="PTM">
    <text evidence="1">Ubiquitinated. CHIP-mediated ubiquitination enhances phosphatase activity after an abiotic stress such as low temperature or darkness (By similarity).</text>
</comment>
<comment type="disruption phenotype">
    <text evidence="9">No visible phenotype under normal growth conditions, but mutant plants are hypersensitive to salt stress.</text>
</comment>
<comment type="similarity">
    <text evidence="11">Belongs to the PPP phosphatase family. PP-2A subfamily.</text>
</comment>
<evidence type="ECO:0000250" key="1"/>
<evidence type="ECO:0000250" key="2">
    <source>
        <dbReference type="UniProtKB" id="P62714"/>
    </source>
</evidence>
<evidence type="ECO:0000250" key="3">
    <source>
        <dbReference type="UniProtKB" id="P67774"/>
    </source>
</evidence>
<evidence type="ECO:0000250" key="4">
    <source>
        <dbReference type="UniProtKB" id="P67775"/>
    </source>
</evidence>
<evidence type="ECO:0000269" key="5">
    <source>
    </source>
</evidence>
<evidence type="ECO:0000269" key="6">
    <source>
    </source>
</evidence>
<evidence type="ECO:0000269" key="7">
    <source>
    </source>
</evidence>
<evidence type="ECO:0000269" key="8">
    <source>
    </source>
</evidence>
<evidence type="ECO:0000269" key="9">
    <source>
    </source>
</evidence>
<evidence type="ECO:0000303" key="10">
    <source>
    </source>
</evidence>
<evidence type="ECO:0000305" key="11"/>
<evidence type="ECO:0000305" key="12">
    <source>
    </source>
</evidence>
<feature type="chain" id="PRO_0000058856" description="Serine/threonine-protein phosphatase PP2A-5 catalytic subunit">
    <location>
        <begin position="1"/>
        <end position="307"/>
    </location>
</feature>
<feature type="active site" description="Proton donor" evidence="1">
    <location>
        <position position="116"/>
    </location>
</feature>
<feature type="binding site" evidence="4">
    <location>
        <position position="55"/>
    </location>
    <ligand>
        <name>Mn(2+)</name>
        <dbReference type="ChEBI" id="CHEBI:29035"/>
        <label>1</label>
    </ligand>
</feature>
<feature type="binding site" evidence="4">
    <location>
        <position position="57"/>
    </location>
    <ligand>
        <name>Mn(2+)</name>
        <dbReference type="ChEBI" id="CHEBI:29035"/>
        <label>1</label>
    </ligand>
</feature>
<feature type="binding site" evidence="4">
    <location>
        <position position="83"/>
    </location>
    <ligand>
        <name>Mn(2+)</name>
        <dbReference type="ChEBI" id="CHEBI:29035"/>
        <label>1</label>
    </ligand>
</feature>
<feature type="binding site" evidence="4">
    <location>
        <position position="83"/>
    </location>
    <ligand>
        <name>Mn(2+)</name>
        <dbReference type="ChEBI" id="CHEBI:29035"/>
        <label>2</label>
    </ligand>
</feature>
<feature type="binding site" evidence="4">
    <location>
        <position position="115"/>
    </location>
    <ligand>
        <name>Mn(2+)</name>
        <dbReference type="ChEBI" id="CHEBI:29035"/>
        <label>2</label>
    </ligand>
</feature>
<feature type="binding site" evidence="4">
    <location>
        <position position="165"/>
    </location>
    <ligand>
        <name>Mn(2+)</name>
        <dbReference type="ChEBI" id="CHEBI:29035"/>
        <label>2</label>
    </ligand>
</feature>
<feature type="binding site" evidence="4">
    <location>
        <position position="239"/>
    </location>
    <ligand>
        <name>Mn(2+)</name>
        <dbReference type="ChEBI" id="CHEBI:29035"/>
        <label>2</label>
    </ligand>
</feature>
<feature type="modified residue" description="Leucine methyl ester" evidence="12">
    <location>
        <position position="307"/>
    </location>
</feature>
<proteinExistence type="evidence at protein level"/>